<name>TPX_HELPY</name>
<dbReference type="EC" id="1.11.1.24" evidence="1 2"/>
<dbReference type="EMBL" id="AE000511">
    <property type="protein sequence ID" value="AAD07455.1"/>
    <property type="molecule type" value="Genomic_DNA"/>
</dbReference>
<dbReference type="PIR" id="F64568">
    <property type="entry name" value="F64568"/>
</dbReference>
<dbReference type="RefSeq" id="NP_207188.1">
    <property type="nucleotide sequence ID" value="NC_000915.1"/>
</dbReference>
<dbReference type="RefSeq" id="WP_001174648.1">
    <property type="nucleotide sequence ID" value="NC_018939.1"/>
</dbReference>
<dbReference type="SMR" id="O25151"/>
<dbReference type="FunCoup" id="O25151">
    <property type="interactions" value="151"/>
</dbReference>
<dbReference type="STRING" id="85962.HP_0390"/>
<dbReference type="PaxDb" id="85962-C694_01980"/>
<dbReference type="EnsemblBacteria" id="AAD07455">
    <property type="protein sequence ID" value="AAD07455"/>
    <property type="gene ID" value="HP_0390"/>
</dbReference>
<dbReference type="KEGG" id="heo:C694_01980"/>
<dbReference type="KEGG" id="hpy:HP_0390"/>
<dbReference type="PATRIC" id="fig|85962.47.peg.414"/>
<dbReference type="eggNOG" id="COG2077">
    <property type="taxonomic scope" value="Bacteria"/>
</dbReference>
<dbReference type="InParanoid" id="O25151"/>
<dbReference type="OrthoDB" id="9781543at2"/>
<dbReference type="PhylomeDB" id="O25151"/>
<dbReference type="Proteomes" id="UP000000429">
    <property type="component" value="Chromosome"/>
</dbReference>
<dbReference type="GO" id="GO:0008379">
    <property type="term" value="F:thioredoxin peroxidase activity"/>
    <property type="evidence" value="ECO:0007669"/>
    <property type="project" value="UniProtKB-UniRule"/>
</dbReference>
<dbReference type="CDD" id="cd03014">
    <property type="entry name" value="PRX_Atyp2cys"/>
    <property type="match status" value="1"/>
</dbReference>
<dbReference type="Gene3D" id="3.40.30.10">
    <property type="entry name" value="Glutaredoxin"/>
    <property type="match status" value="1"/>
</dbReference>
<dbReference type="HAMAP" id="MF_00269">
    <property type="entry name" value="Tpx"/>
    <property type="match status" value="1"/>
</dbReference>
<dbReference type="InterPro" id="IPR013740">
    <property type="entry name" value="Redoxin"/>
</dbReference>
<dbReference type="InterPro" id="IPR036249">
    <property type="entry name" value="Thioredoxin-like_sf"/>
</dbReference>
<dbReference type="InterPro" id="IPR013766">
    <property type="entry name" value="Thioredoxin_domain"/>
</dbReference>
<dbReference type="InterPro" id="IPR002065">
    <property type="entry name" value="TPX"/>
</dbReference>
<dbReference type="InterPro" id="IPR018219">
    <property type="entry name" value="Tpx_CS"/>
</dbReference>
<dbReference type="InterPro" id="IPR050455">
    <property type="entry name" value="Tpx_Peroxidase_subfamily"/>
</dbReference>
<dbReference type="NCBIfam" id="NF001808">
    <property type="entry name" value="PRK00522.1"/>
    <property type="match status" value="1"/>
</dbReference>
<dbReference type="PANTHER" id="PTHR43110">
    <property type="entry name" value="THIOL PEROXIDASE"/>
    <property type="match status" value="1"/>
</dbReference>
<dbReference type="PANTHER" id="PTHR43110:SF1">
    <property type="entry name" value="THIOL PEROXIDASE"/>
    <property type="match status" value="1"/>
</dbReference>
<dbReference type="Pfam" id="PF08534">
    <property type="entry name" value="Redoxin"/>
    <property type="match status" value="1"/>
</dbReference>
<dbReference type="SUPFAM" id="SSF52833">
    <property type="entry name" value="Thioredoxin-like"/>
    <property type="match status" value="1"/>
</dbReference>
<dbReference type="PROSITE" id="PS51352">
    <property type="entry name" value="THIOREDOXIN_2"/>
    <property type="match status" value="1"/>
</dbReference>
<dbReference type="PROSITE" id="PS01265">
    <property type="entry name" value="TPX"/>
    <property type="match status" value="1"/>
</dbReference>
<feature type="initiator methionine" description="Removed" evidence="2">
    <location>
        <position position="1"/>
    </location>
</feature>
<feature type="chain" id="PRO_0000187881" description="Thiol peroxidase">
    <location>
        <begin position="2"/>
        <end position="166"/>
    </location>
</feature>
<feature type="domain" description="Thioredoxin" evidence="1">
    <location>
        <begin position="18"/>
        <end position="166"/>
    </location>
</feature>
<feature type="active site" description="Cysteine sulfenic acid (-SOH) intermediate" evidence="1">
    <location>
        <position position="60"/>
    </location>
</feature>
<feature type="disulfide bond" description="Redox-active" evidence="1">
    <location>
        <begin position="60"/>
        <end position="94"/>
    </location>
</feature>
<proteinExistence type="evidence at protein level"/>
<keyword id="KW-0049">Antioxidant</keyword>
<keyword id="KW-0903">Direct protein sequencing</keyword>
<keyword id="KW-1015">Disulfide bond</keyword>
<keyword id="KW-0560">Oxidoreductase</keyword>
<keyword id="KW-0575">Peroxidase</keyword>
<keyword id="KW-0676">Redox-active center</keyword>
<keyword id="KW-1185">Reference proteome</keyword>
<accession>O25151</accession>
<reference key="1">
    <citation type="journal article" date="1997" name="Nature">
        <title>The complete genome sequence of the gastric pathogen Helicobacter pylori.</title>
        <authorList>
            <person name="Tomb J.-F."/>
            <person name="White O."/>
            <person name="Kerlavage A.R."/>
            <person name="Clayton R.A."/>
            <person name="Sutton G.G."/>
            <person name="Fleischmann R.D."/>
            <person name="Ketchum K.A."/>
            <person name="Klenk H.-P."/>
            <person name="Gill S.R."/>
            <person name="Dougherty B.A."/>
            <person name="Nelson K.E."/>
            <person name="Quackenbush J."/>
            <person name="Zhou L."/>
            <person name="Kirkness E.F."/>
            <person name="Peterson S.N."/>
            <person name="Loftus B.J."/>
            <person name="Richardson D.L."/>
            <person name="Dodson R.J."/>
            <person name="Khalak H.G."/>
            <person name="Glodek A."/>
            <person name="McKenney K."/>
            <person name="FitzGerald L.M."/>
            <person name="Lee N."/>
            <person name="Adams M.D."/>
            <person name="Hickey E.K."/>
            <person name="Berg D.E."/>
            <person name="Gocayne J.D."/>
            <person name="Utterback T.R."/>
            <person name="Peterson J.D."/>
            <person name="Kelley J.M."/>
            <person name="Cotton M.D."/>
            <person name="Weidman J.F."/>
            <person name="Fujii C."/>
            <person name="Bowman C."/>
            <person name="Watthey L."/>
            <person name="Wallin E."/>
            <person name="Hayes W.S."/>
            <person name="Borodovsky M."/>
            <person name="Karp P.D."/>
            <person name="Smith H.O."/>
            <person name="Fraser C.M."/>
            <person name="Venter J.C."/>
        </authorList>
    </citation>
    <scope>NUCLEOTIDE SEQUENCE [LARGE SCALE GENOMIC DNA]</scope>
    <source>
        <strain>ATCC 700392 / 26695</strain>
    </source>
</reference>
<reference key="2">
    <citation type="journal article" date="1997" name="FEBS Lett.">
        <title>Scavengase p20: a novel family of bacterial antioxidant enzymes.</title>
        <authorList>
            <person name="Wan X.Y."/>
            <person name="Zhou Y."/>
            <person name="Yan Z.Y."/>
            <person name="Wang H.L."/>
            <person name="Hou Y.D."/>
            <person name="Jin D.Y."/>
        </authorList>
    </citation>
    <scope>PARTIAL PROTEIN SEQUENCE OF 2-9</scope>
    <scope>FUNCTION</scope>
    <scope>CATALYTIC ACTIVITY</scope>
    <source>
        <strain>ATCC 43629 / JCM 7656 / NCTC 11639 / UA802</strain>
    </source>
</reference>
<organism>
    <name type="scientific">Helicobacter pylori (strain ATCC 700392 / 26695)</name>
    <name type="common">Campylobacter pylori</name>
    <dbReference type="NCBI Taxonomy" id="85962"/>
    <lineage>
        <taxon>Bacteria</taxon>
        <taxon>Pseudomonadati</taxon>
        <taxon>Campylobacterota</taxon>
        <taxon>Epsilonproteobacteria</taxon>
        <taxon>Campylobacterales</taxon>
        <taxon>Helicobacteraceae</taxon>
        <taxon>Helicobacter</taxon>
    </lineage>
</organism>
<gene>
    <name evidence="1" type="primary">tpx</name>
    <name type="ordered locus">HP_0390</name>
</gene>
<comment type="function">
    <text evidence="1 2">Thiol-specific peroxidase that catalyzes the reduction of hydrogen peroxide and organic hydroperoxides to water and alcohols, respectively. Plays a role in cell protection against oxidative stress by detoxifying peroxides.</text>
</comment>
<comment type="catalytic activity">
    <reaction evidence="1 2">
        <text>a hydroperoxide + [thioredoxin]-dithiol = an alcohol + [thioredoxin]-disulfide + H2O</text>
        <dbReference type="Rhea" id="RHEA:62620"/>
        <dbReference type="Rhea" id="RHEA-COMP:10698"/>
        <dbReference type="Rhea" id="RHEA-COMP:10700"/>
        <dbReference type="ChEBI" id="CHEBI:15377"/>
        <dbReference type="ChEBI" id="CHEBI:29950"/>
        <dbReference type="ChEBI" id="CHEBI:30879"/>
        <dbReference type="ChEBI" id="CHEBI:35924"/>
        <dbReference type="ChEBI" id="CHEBI:50058"/>
        <dbReference type="EC" id="1.11.1.24"/>
    </reaction>
</comment>
<comment type="subunit">
    <text evidence="1">Homodimer.</text>
</comment>
<comment type="miscellaneous">
    <text evidence="1">The active site is a conserved redox-active cysteine residue, the peroxidatic cysteine (C(P)), which makes the nucleophilic attack on the peroxide substrate. The peroxide oxidizes the C(P)-SH to cysteine sulfenic acid (C(P)-SOH), which then reacts with another cysteine residue, the resolving cysteine (C(R)), to form a disulfide bridge. The disulfide is subsequently reduced by an appropriate electron donor to complete the catalytic cycle. In this atypical 2-Cys peroxiredoxin, C(R) is present in the same subunit to form an intramolecular disulfide. The disulfide is subsequently reduced by thioredoxin.</text>
</comment>
<comment type="similarity">
    <text evidence="1">Belongs to the peroxiredoxin family. Tpx subfamily.</text>
</comment>
<evidence type="ECO:0000255" key="1">
    <source>
        <dbReference type="HAMAP-Rule" id="MF_00269"/>
    </source>
</evidence>
<evidence type="ECO:0000269" key="2">
    <source>
    </source>
</evidence>
<protein>
    <recommendedName>
        <fullName evidence="1">Thiol peroxidase</fullName>
        <shortName evidence="1">Tpx</shortName>
        <ecNumber evidence="1 2">1.11.1.24</ecNumber>
    </recommendedName>
    <alternativeName>
        <fullName evidence="1">Peroxiredoxin tpx</fullName>
        <shortName evidence="1">Prx</shortName>
    </alternativeName>
    <alternativeName>
        <fullName evidence="1">Thioredoxin peroxidase</fullName>
    </alternativeName>
    <alternativeName>
        <fullName evidence="1">Thioredoxin-dependent peroxiredoxin</fullName>
    </alternativeName>
</protein>
<sequence length="166" mass="18292">MQKVTFKEETYQLEGKALKVGDKAPDVKLVNGDLQEVNLLKQGVRFQVVSALPSLTGSVCLLQAKHFNEQTGKLPSVSFSVISMDLPFSQGQICGAEGIKDLRILSDFRYKAFGENYGVLLGKGSLQGLLARSVFVLDDKGVVIYKEIVQNILEEPNYEALLKVLK</sequence>